<name>EFTS_BACCQ</name>
<comment type="function">
    <text evidence="1">Associates with the EF-Tu.GDP complex and induces the exchange of GDP to GTP. It remains bound to the aminoacyl-tRNA.EF-Tu.GTP complex up to the GTP hydrolysis stage on the ribosome.</text>
</comment>
<comment type="subcellular location">
    <subcellularLocation>
        <location evidence="1">Cytoplasm</location>
    </subcellularLocation>
</comment>
<comment type="similarity">
    <text evidence="1">Belongs to the EF-Ts family.</text>
</comment>
<gene>
    <name evidence="1" type="primary">tsf</name>
    <name type="ordered locus">BCQ_3611</name>
</gene>
<evidence type="ECO:0000255" key="1">
    <source>
        <dbReference type="HAMAP-Rule" id="MF_00050"/>
    </source>
</evidence>
<dbReference type="EMBL" id="CP000227">
    <property type="protein sequence ID" value="ACM14039.1"/>
    <property type="molecule type" value="Genomic_DNA"/>
</dbReference>
<dbReference type="SMR" id="B9IVB5"/>
<dbReference type="KEGG" id="bcq:BCQ_3611"/>
<dbReference type="HOGENOM" id="CLU_047155_0_2_9"/>
<dbReference type="Proteomes" id="UP000000441">
    <property type="component" value="Chromosome"/>
</dbReference>
<dbReference type="GO" id="GO:0005737">
    <property type="term" value="C:cytoplasm"/>
    <property type="evidence" value="ECO:0007669"/>
    <property type="project" value="UniProtKB-SubCell"/>
</dbReference>
<dbReference type="GO" id="GO:0003746">
    <property type="term" value="F:translation elongation factor activity"/>
    <property type="evidence" value="ECO:0007669"/>
    <property type="project" value="UniProtKB-UniRule"/>
</dbReference>
<dbReference type="CDD" id="cd14275">
    <property type="entry name" value="UBA_EF-Ts"/>
    <property type="match status" value="1"/>
</dbReference>
<dbReference type="FunFam" id="1.10.286.20:FF:000003">
    <property type="entry name" value="Elongation factor Ts"/>
    <property type="match status" value="1"/>
</dbReference>
<dbReference type="FunFam" id="1.10.8.10:FF:000001">
    <property type="entry name" value="Elongation factor Ts"/>
    <property type="match status" value="1"/>
</dbReference>
<dbReference type="FunFam" id="3.30.479.20:FF:000005">
    <property type="entry name" value="Elongation factor Ts"/>
    <property type="match status" value="1"/>
</dbReference>
<dbReference type="Gene3D" id="1.10.286.20">
    <property type="match status" value="1"/>
</dbReference>
<dbReference type="Gene3D" id="1.10.8.10">
    <property type="entry name" value="DNA helicase RuvA subunit, C-terminal domain"/>
    <property type="match status" value="1"/>
</dbReference>
<dbReference type="Gene3D" id="3.30.479.20">
    <property type="entry name" value="Elongation factor Ts, dimerisation domain"/>
    <property type="match status" value="2"/>
</dbReference>
<dbReference type="HAMAP" id="MF_00050">
    <property type="entry name" value="EF_Ts"/>
    <property type="match status" value="1"/>
</dbReference>
<dbReference type="InterPro" id="IPR036402">
    <property type="entry name" value="EF-Ts_dimer_sf"/>
</dbReference>
<dbReference type="InterPro" id="IPR001816">
    <property type="entry name" value="Transl_elong_EFTs/EF1B"/>
</dbReference>
<dbReference type="InterPro" id="IPR014039">
    <property type="entry name" value="Transl_elong_EFTs/EF1B_dimer"/>
</dbReference>
<dbReference type="InterPro" id="IPR018101">
    <property type="entry name" value="Transl_elong_Ts_CS"/>
</dbReference>
<dbReference type="InterPro" id="IPR009060">
    <property type="entry name" value="UBA-like_sf"/>
</dbReference>
<dbReference type="NCBIfam" id="TIGR00116">
    <property type="entry name" value="tsf"/>
    <property type="match status" value="1"/>
</dbReference>
<dbReference type="PANTHER" id="PTHR11741">
    <property type="entry name" value="ELONGATION FACTOR TS"/>
    <property type="match status" value="1"/>
</dbReference>
<dbReference type="PANTHER" id="PTHR11741:SF0">
    <property type="entry name" value="ELONGATION FACTOR TS, MITOCHONDRIAL"/>
    <property type="match status" value="1"/>
</dbReference>
<dbReference type="Pfam" id="PF00889">
    <property type="entry name" value="EF_TS"/>
    <property type="match status" value="1"/>
</dbReference>
<dbReference type="SUPFAM" id="SSF54713">
    <property type="entry name" value="Elongation factor Ts (EF-Ts), dimerisation domain"/>
    <property type="match status" value="2"/>
</dbReference>
<dbReference type="SUPFAM" id="SSF46934">
    <property type="entry name" value="UBA-like"/>
    <property type="match status" value="1"/>
</dbReference>
<dbReference type="PROSITE" id="PS01126">
    <property type="entry name" value="EF_TS_1"/>
    <property type="match status" value="1"/>
</dbReference>
<dbReference type="PROSITE" id="PS01127">
    <property type="entry name" value="EF_TS_2"/>
    <property type="match status" value="1"/>
</dbReference>
<protein>
    <recommendedName>
        <fullName evidence="1">Elongation factor Ts</fullName>
        <shortName evidence="1">EF-Ts</shortName>
    </recommendedName>
</protein>
<keyword id="KW-0963">Cytoplasm</keyword>
<keyword id="KW-0251">Elongation factor</keyword>
<keyword id="KW-0648">Protein biosynthesis</keyword>
<accession>B9IVB5</accession>
<reference key="1">
    <citation type="journal article" date="2009" name="J. Bacteriol.">
        <title>Complete genome sequence of the extremophilic Bacillus cereus strain Q1 with industrial applications.</title>
        <authorList>
            <person name="Xiong Z."/>
            <person name="Jiang Y."/>
            <person name="Qi D."/>
            <person name="Lu H."/>
            <person name="Yang F."/>
            <person name="Yang J."/>
            <person name="Chen L."/>
            <person name="Sun L."/>
            <person name="Xu X."/>
            <person name="Xue Y."/>
            <person name="Zhu Y."/>
            <person name="Jin Q."/>
        </authorList>
    </citation>
    <scope>NUCLEOTIDE SEQUENCE [LARGE SCALE GENOMIC DNA]</scope>
    <source>
        <strain>Q1</strain>
    </source>
</reference>
<sequence>MAITAQMVKELREKTGAGMMDCKKALTETNGDMEKAIDFLREKGIAKAAKKADRIAAEGLTFIETNGNDGLILELNSETDFVAKNEGFQTLIKELAAHLLAKKPANVEEAMAQTMENGKKVEEHINEAIAKIGEKLTLRRFEIVSKTDADAFGAYLHMGGRIGVLTVLEGSTDEAAAKDVAMHIAAVNPKYIDRDAVTAEEVEHERQVLTQQALNEGKPEKIVAKMVEGRLGKFFEEICLLDQAFVKNPDMKVRQFVESKGATLKGFVRYAVGEGIEKREDNFAEEVMNQVKGSN</sequence>
<proteinExistence type="inferred from homology"/>
<feature type="chain" id="PRO_1000189860" description="Elongation factor Ts">
    <location>
        <begin position="1"/>
        <end position="295"/>
    </location>
</feature>
<feature type="region of interest" description="Involved in Mg(2+) ion dislocation from EF-Tu" evidence="1">
    <location>
        <begin position="79"/>
        <end position="82"/>
    </location>
</feature>
<organism>
    <name type="scientific">Bacillus cereus (strain Q1)</name>
    <dbReference type="NCBI Taxonomy" id="361100"/>
    <lineage>
        <taxon>Bacteria</taxon>
        <taxon>Bacillati</taxon>
        <taxon>Bacillota</taxon>
        <taxon>Bacilli</taxon>
        <taxon>Bacillales</taxon>
        <taxon>Bacillaceae</taxon>
        <taxon>Bacillus</taxon>
        <taxon>Bacillus cereus group</taxon>
    </lineage>
</organism>